<accession>P50884</accession>
<feature type="chain" id="PRO_0000104462" description="Large ribosomal subunit protein uL11">
    <location>
        <begin position="1" status="less than"/>
        <end position="157"/>
    </location>
</feature>
<feature type="non-terminal residue">
    <location>
        <position position="1"/>
    </location>
</feature>
<keyword id="KW-0687">Ribonucleoprotein</keyword>
<keyword id="KW-0689">Ribosomal protein</keyword>
<proteinExistence type="evidence at transcript level"/>
<gene>
    <name type="primary">RPL12</name>
</gene>
<protein>
    <recommendedName>
        <fullName evidence="2">Large ribosomal subunit protein uL11</fullName>
    </recommendedName>
    <alternativeName>
        <fullName>60S ribosomal protein L12</fullName>
    </alternativeName>
</protein>
<comment type="function">
    <text evidence="1">This protein binds directly to 26S ribosomal RNA.</text>
</comment>
<comment type="similarity">
    <text evidence="2">Belongs to the universal ribosomal protein uL11 family.</text>
</comment>
<evidence type="ECO:0000250" key="1"/>
<evidence type="ECO:0000305" key="2"/>
<sequence>VVEVCVRVTGGEVGDASSLAPKIGPLGLSPKKIGEDIAKETLKDWKGLRITVKLTVQNRQAKISVIPSAAALVIKALKEPARDRKKEKNIKHTGSVTMSDIIEIARVMRPRSCAKDLANGCKEILGTAVSVGCKVDGKDPRDVISAIDDGAIEIPDA</sequence>
<organism>
    <name type="scientific">Chlamydomonas reinhardtii</name>
    <name type="common">Chlamydomonas smithii</name>
    <dbReference type="NCBI Taxonomy" id="3055"/>
    <lineage>
        <taxon>Eukaryota</taxon>
        <taxon>Viridiplantae</taxon>
        <taxon>Chlorophyta</taxon>
        <taxon>core chlorophytes</taxon>
        <taxon>Chlorophyceae</taxon>
        <taxon>CS clade</taxon>
        <taxon>Chlamydomonadales</taxon>
        <taxon>Chlamydomonadaceae</taxon>
        <taxon>Chlamydomonas</taxon>
    </lineage>
</organism>
<name>RL12_CHLRE</name>
<reference key="1">
    <citation type="submission" date="1996-01" db="EMBL/GenBank/DDBJ databases">
        <authorList>
            <person name="Walter F."/>
        </authorList>
    </citation>
    <scope>NUCLEOTIDE SEQUENCE [MRNA]</scope>
    <source>
        <strain>7781</strain>
    </source>
</reference>
<dbReference type="EMBL" id="X95314">
    <property type="protein sequence ID" value="CAA64626.1"/>
    <property type="molecule type" value="mRNA"/>
</dbReference>
<dbReference type="PIR" id="T08157">
    <property type="entry name" value="T08157"/>
</dbReference>
<dbReference type="SMR" id="P50884"/>
<dbReference type="PaxDb" id="3055-EDP00664"/>
<dbReference type="ProMEX" id="P50884"/>
<dbReference type="eggNOG" id="KOG0886">
    <property type="taxonomic scope" value="Eukaryota"/>
</dbReference>
<dbReference type="GO" id="GO:1990904">
    <property type="term" value="C:ribonucleoprotein complex"/>
    <property type="evidence" value="ECO:0007669"/>
    <property type="project" value="UniProtKB-KW"/>
</dbReference>
<dbReference type="GO" id="GO:0005840">
    <property type="term" value="C:ribosome"/>
    <property type="evidence" value="ECO:0007669"/>
    <property type="project" value="UniProtKB-KW"/>
</dbReference>
<dbReference type="GO" id="GO:0003735">
    <property type="term" value="F:structural constituent of ribosome"/>
    <property type="evidence" value="ECO:0007669"/>
    <property type="project" value="InterPro"/>
</dbReference>
<dbReference type="GO" id="GO:0006412">
    <property type="term" value="P:translation"/>
    <property type="evidence" value="ECO:0007669"/>
    <property type="project" value="InterPro"/>
</dbReference>
<dbReference type="CDD" id="cd00349">
    <property type="entry name" value="Ribosomal_L11"/>
    <property type="match status" value="1"/>
</dbReference>
<dbReference type="FunFam" id="1.10.10.250:FF:000002">
    <property type="entry name" value="60S ribosomal protein L12"/>
    <property type="match status" value="1"/>
</dbReference>
<dbReference type="FunFam" id="3.30.1550.10:FF:000002">
    <property type="entry name" value="60S ribosomal protein L12"/>
    <property type="match status" value="1"/>
</dbReference>
<dbReference type="Gene3D" id="1.10.10.250">
    <property type="entry name" value="Ribosomal protein L11, C-terminal domain"/>
    <property type="match status" value="1"/>
</dbReference>
<dbReference type="Gene3D" id="3.30.1550.10">
    <property type="entry name" value="Ribosomal protein L11/L12, N-terminal domain"/>
    <property type="match status" value="1"/>
</dbReference>
<dbReference type="HAMAP" id="MF_00736">
    <property type="entry name" value="Ribosomal_uL11"/>
    <property type="match status" value="1"/>
</dbReference>
<dbReference type="InterPro" id="IPR000911">
    <property type="entry name" value="Ribosomal_uL11"/>
</dbReference>
<dbReference type="InterPro" id="IPR020783">
    <property type="entry name" value="Ribosomal_uL11_C"/>
</dbReference>
<dbReference type="InterPro" id="IPR036769">
    <property type="entry name" value="Ribosomal_uL11_C_sf"/>
</dbReference>
<dbReference type="InterPro" id="IPR020785">
    <property type="entry name" value="Ribosomal_uL11_CS"/>
</dbReference>
<dbReference type="InterPro" id="IPR020784">
    <property type="entry name" value="Ribosomal_uL11_N"/>
</dbReference>
<dbReference type="InterPro" id="IPR036796">
    <property type="entry name" value="Ribosomal_uL11_N_sf"/>
</dbReference>
<dbReference type="PANTHER" id="PTHR11661">
    <property type="entry name" value="60S RIBOSOMAL PROTEIN L12"/>
    <property type="match status" value="1"/>
</dbReference>
<dbReference type="PANTHER" id="PTHR11661:SF2">
    <property type="entry name" value="LARGE RIBOSOMAL SUBUNIT PROTEIN UL11"/>
    <property type="match status" value="1"/>
</dbReference>
<dbReference type="Pfam" id="PF00298">
    <property type="entry name" value="Ribosomal_L11"/>
    <property type="match status" value="1"/>
</dbReference>
<dbReference type="Pfam" id="PF03946">
    <property type="entry name" value="Ribosomal_L11_N"/>
    <property type="match status" value="1"/>
</dbReference>
<dbReference type="SMART" id="SM00649">
    <property type="entry name" value="RL11"/>
    <property type="match status" value="1"/>
</dbReference>
<dbReference type="SUPFAM" id="SSF54747">
    <property type="entry name" value="Ribosomal L11/L12e N-terminal domain"/>
    <property type="match status" value="1"/>
</dbReference>
<dbReference type="SUPFAM" id="SSF46906">
    <property type="entry name" value="Ribosomal protein L11, C-terminal domain"/>
    <property type="match status" value="1"/>
</dbReference>
<dbReference type="PROSITE" id="PS00359">
    <property type="entry name" value="RIBOSOMAL_L11"/>
    <property type="match status" value="1"/>
</dbReference>